<organism>
    <name type="scientific">Leptinotarsa decemlineata</name>
    <name type="common">Colorado potato beetle</name>
    <name type="synonym">Doryphora decemlineata</name>
    <dbReference type="NCBI Taxonomy" id="7539"/>
    <lineage>
        <taxon>Eukaryota</taxon>
        <taxon>Metazoa</taxon>
        <taxon>Ecdysozoa</taxon>
        <taxon>Arthropoda</taxon>
        <taxon>Hexapoda</taxon>
        <taxon>Insecta</taxon>
        <taxon>Pterygota</taxon>
        <taxon>Neoptera</taxon>
        <taxon>Endopterygota</taxon>
        <taxon>Coleoptera</taxon>
        <taxon>Polyphaga</taxon>
        <taxon>Cucujiformia</taxon>
        <taxon>Chrysomeloidea</taxon>
        <taxon>Chrysomelidae</taxon>
        <taxon>Chrysomelinae</taxon>
        <taxon>Doryphorini</taxon>
        <taxon>Leptinotarsa</taxon>
    </lineage>
</organism>
<protein>
    <recommendedName>
        <fullName>Neuropeptide NPF-2</fullName>
        <shortName>Led-NPF-2</shortName>
    </recommendedName>
    <alternativeName>
        <fullName>Short neuropeptide F II</fullName>
    </alternativeName>
</protein>
<dbReference type="GO" id="GO:0005576">
    <property type="term" value="C:extracellular region"/>
    <property type="evidence" value="ECO:0007669"/>
    <property type="project" value="UniProtKB-SubCell"/>
</dbReference>
<dbReference type="GO" id="GO:0005179">
    <property type="term" value="F:hormone activity"/>
    <property type="evidence" value="ECO:0007669"/>
    <property type="project" value="UniProtKB-KW"/>
</dbReference>
<dbReference type="GO" id="GO:0007218">
    <property type="term" value="P:neuropeptide signaling pathway"/>
    <property type="evidence" value="ECO:0007669"/>
    <property type="project" value="UniProtKB-KW"/>
</dbReference>
<proteinExistence type="evidence at protein level"/>
<evidence type="ECO:0000250" key="1">
    <source>
        <dbReference type="UniProtKB" id="Q9VIQ0"/>
    </source>
</evidence>
<evidence type="ECO:0000255" key="2"/>
<evidence type="ECO:0000269" key="3">
    <source>
    </source>
</evidence>
<evidence type="ECO:0000269" key="4">
    <source>
    </source>
</evidence>
<evidence type="ECO:0000305" key="5"/>
<comment type="function">
    <text evidence="3">Neuropeptide. May be involved in the regulation of adult diapause.</text>
</comment>
<comment type="subcellular location">
    <subcellularLocation>
        <location evidence="1">Secreted</location>
    </subcellularLocation>
</comment>
<comment type="developmental stage">
    <text evidence="3">Found in the brain of non-diapausing beetles, but not in diapausing beetles.</text>
</comment>
<comment type="mass spectrometry">
    <text>Using a Fisons mass spectrometer.</text>
</comment>
<comment type="mass spectrometry">
    <text>Using a Bruker mass spectrometer.</text>
</comment>
<comment type="similarity">
    <text evidence="2">Belongs to the NPY family.</text>
</comment>
<reference evidence="5" key="1">
    <citation type="journal article" date="1996" name="Insect Biochem. Mol. Biol.">
        <title>Insect neuropeptide F (NPF)-related peptides: isolation from Colorado potato beetle (Leptinotarsa decemlineata) brain.</title>
        <authorList>
            <person name="Spittaels K."/>
            <person name="Verhaert P."/>
            <person name="Shaw C."/>
            <person name="Johnston R.N."/>
            <person name="Devreese B."/>
            <person name="Van Beeumen J."/>
            <person name="De Loof A."/>
        </authorList>
    </citation>
    <scope>PROTEIN SEQUENCE</scope>
    <scope>MASS SPECTROMETRY</scope>
    <scope>AMIDATION AT PHE-8</scope>
    <source>
        <tissue evidence="4">Cerebral ganglion</tissue>
    </source>
</reference>
<reference evidence="5" key="2">
    <citation type="journal article" date="2004" name="Biochem. Biophys. Res. Commun.">
        <title>Diapausing Colorado potato beetles are devoid of short neuropeptide F I and II.</title>
        <authorList>
            <person name="Huybrechts J."/>
            <person name="De Loof A."/>
            <person name="Schoofs L."/>
        </authorList>
    </citation>
    <scope>FUNCTION</scope>
    <scope>DEVELOPMENTAL STAGE</scope>
</reference>
<name>NPF2_LEPDE</name>
<accession>P85514</accession>
<feature type="peptide" id="PRO_0000328938" description="Neuropeptide NPF-2" evidence="4">
    <location>
        <begin position="1"/>
        <end position="8"/>
    </location>
</feature>
<feature type="modified residue" description="Phenylalanine amide" evidence="4">
    <location>
        <position position="8"/>
    </location>
</feature>
<sequence>APSLRLRF</sequence>
<keyword id="KW-0027">Amidation</keyword>
<keyword id="KW-0903">Direct protein sequencing</keyword>
<keyword id="KW-0372">Hormone</keyword>
<keyword id="KW-0527">Neuropeptide</keyword>
<keyword id="KW-0964">Secreted</keyword>